<sequence>MLSGQLVVRLFSMASRVCMSRGSAGSGVIGPVEAAIRTKLEQALNPEVLELRNESGGHAVPPGSETHFRVAVVSSRFEGLSPLQRHRLVHAALSEELAGPVHALAIQARTPAQWKENPQLDTSPACLGGSKKSRN</sequence>
<proteinExistence type="evidence at transcript level"/>
<evidence type="ECO:0000250" key="1">
    <source>
        <dbReference type="UniProtKB" id="Q3E793"/>
    </source>
</evidence>
<evidence type="ECO:0000250" key="2">
    <source>
        <dbReference type="UniProtKB" id="Q9D8S9"/>
    </source>
</evidence>
<evidence type="ECO:0000250" key="3">
    <source>
        <dbReference type="UniProtKB" id="Q9Y3E2"/>
    </source>
</evidence>
<evidence type="ECO:0000256" key="4">
    <source>
        <dbReference type="SAM" id="MobiDB-lite"/>
    </source>
</evidence>
<evidence type="ECO:0000305" key="5"/>
<dbReference type="EMBL" id="BC102140">
    <property type="protein sequence ID" value="AAI02141.1"/>
    <property type="molecule type" value="mRNA"/>
</dbReference>
<dbReference type="RefSeq" id="NP_001029524.1">
    <property type="nucleotide sequence ID" value="NM_001034352.1"/>
</dbReference>
<dbReference type="SMR" id="Q3T138"/>
<dbReference type="FunCoup" id="Q3T138">
    <property type="interactions" value="936"/>
</dbReference>
<dbReference type="STRING" id="9913.ENSBTAP00000043360"/>
<dbReference type="PaxDb" id="9913-ENSBTAP00000043360"/>
<dbReference type="Ensembl" id="ENSBTAT00000096294.1">
    <property type="protein sequence ID" value="ENSBTAP00000080372.1"/>
    <property type="gene ID" value="ENSBTAG00000006050.5"/>
</dbReference>
<dbReference type="Ensembl" id="ENSBTAT00000108618.1">
    <property type="protein sequence ID" value="ENSBTAP00000103027.1"/>
    <property type="gene ID" value="ENSBTAG00000006050.5"/>
</dbReference>
<dbReference type="GeneID" id="509530"/>
<dbReference type="KEGG" id="bta:509530"/>
<dbReference type="CTD" id="51027"/>
<dbReference type="VEuPathDB" id="HostDB:ENSBTAG00000006050"/>
<dbReference type="VGNC" id="VGNC:50092">
    <property type="gene designation" value="BOLA1"/>
</dbReference>
<dbReference type="eggNOG" id="KOG2313">
    <property type="taxonomic scope" value="Eukaryota"/>
</dbReference>
<dbReference type="GeneTree" id="ENSGT00510000048165"/>
<dbReference type="HOGENOM" id="CLU_109462_3_0_1"/>
<dbReference type="InParanoid" id="Q3T138"/>
<dbReference type="OMA" id="CLGGFGK"/>
<dbReference type="OrthoDB" id="4983at2759"/>
<dbReference type="TreeFam" id="TF354266"/>
<dbReference type="Proteomes" id="UP000009136">
    <property type="component" value="Chromosome 3"/>
</dbReference>
<dbReference type="Bgee" id="ENSBTAG00000006050">
    <property type="expression patterns" value="Expressed in choroid plexus and 109 other cell types or tissues"/>
</dbReference>
<dbReference type="GO" id="GO:0005739">
    <property type="term" value="C:mitochondrion"/>
    <property type="evidence" value="ECO:0000250"/>
    <property type="project" value="UniProtKB"/>
</dbReference>
<dbReference type="FunFam" id="3.30.300.90:FF:000001">
    <property type="entry name" value="Transcriptional regulator BolA"/>
    <property type="match status" value="1"/>
</dbReference>
<dbReference type="Gene3D" id="3.30.300.90">
    <property type="entry name" value="BolA-like"/>
    <property type="match status" value="1"/>
</dbReference>
<dbReference type="InterPro" id="IPR002634">
    <property type="entry name" value="BolA"/>
</dbReference>
<dbReference type="InterPro" id="IPR036065">
    <property type="entry name" value="BolA-like_sf"/>
</dbReference>
<dbReference type="InterPro" id="IPR050961">
    <property type="entry name" value="BolA/IbaG_stress_morph_reg"/>
</dbReference>
<dbReference type="PANTHER" id="PTHR46229">
    <property type="entry name" value="BOLA TRANSCRIPTION REGULATOR"/>
    <property type="match status" value="1"/>
</dbReference>
<dbReference type="PANTHER" id="PTHR46229:SF2">
    <property type="entry name" value="BOLA-LIKE PROTEIN 1"/>
    <property type="match status" value="1"/>
</dbReference>
<dbReference type="Pfam" id="PF01722">
    <property type="entry name" value="BolA"/>
    <property type="match status" value="1"/>
</dbReference>
<dbReference type="SUPFAM" id="SSF82657">
    <property type="entry name" value="BolA-like"/>
    <property type="match status" value="1"/>
</dbReference>
<reference key="1">
    <citation type="submission" date="2005-08" db="EMBL/GenBank/DDBJ databases">
        <authorList>
            <consortium name="NIH - Mammalian Gene Collection (MGC) project"/>
        </authorList>
    </citation>
    <scope>NUCLEOTIDE SEQUENCE [LARGE SCALE MRNA]</scope>
    <source>
        <strain>Crossbred X Angus</strain>
        <tissue>Ileum</tissue>
    </source>
</reference>
<gene>
    <name type="primary">BOLA1</name>
</gene>
<accession>Q3T138</accession>
<keyword id="KW-0496">Mitochondrion</keyword>
<keyword id="KW-0597">Phosphoprotein</keyword>
<keyword id="KW-1185">Reference proteome</keyword>
<organism>
    <name type="scientific">Bos taurus</name>
    <name type="common">Bovine</name>
    <dbReference type="NCBI Taxonomy" id="9913"/>
    <lineage>
        <taxon>Eukaryota</taxon>
        <taxon>Metazoa</taxon>
        <taxon>Chordata</taxon>
        <taxon>Craniata</taxon>
        <taxon>Vertebrata</taxon>
        <taxon>Euteleostomi</taxon>
        <taxon>Mammalia</taxon>
        <taxon>Eutheria</taxon>
        <taxon>Laurasiatheria</taxon>
        <taxon>Artiodactyla</taxon>
        <taxon>Ruminantia</taxon>
        <taxon>Pecora</taxon>
        <taxon>Bovidae</taxon>
        <taxon>Bovinae</taxon>
        <taxon>Bos</taxon>
    </lineage>
</organism>
<name>BOLA1_BOVIN</name>
<protein>
    <recommendedName>
        <fullName>BolA-like protein 1</fullName>
    </recommendedName>
</protein>
<comment type="function">
    <text evidence="1 3">Acts as a mitochondrial iron-sulfur (Fe-S) cluster assembly factor that facilitates (Fe-S) cluster insertion into a subset of mitochondrial proteins (By similarity). Probably acts together with the monothiol glutaredoxin GLRX5. May protect cells against oxidative stress (By similarity).</text>
</comment>
<comment type="subunit">
    <text evidence="3">Interacts with GLRX5.</text>
</comment>
<comment type="subcellular location">
    <subcellularLocation>
        <location evidence="3">Mitochondrion</location>
    </subcellularLocation>
</comment>
<comment type="similarity">
    <text evidence="5">Belongs to the BolA/IbaG family.</text>
</comment>
<feature type="chain" id="PRO_0000245499" description="BolA-like protein 1">
    <location>
        <begin position="1"/>
        <end position="135"/>
    </location>
</feature>
<feature type="region of interest" description="Disordered" evidence="4">
    <location>
        <begin position="114"/>
        <end position="135"/>
    </location>
</feature>
<feature type="modified residue" description="Phosphoserine" evidence="2">
    <location>
        <position position="81"/>
    </location>
</feature>